<sequence length="246" mass="26138">MKSTFLFALFVLFLAASEAATDYPTNPPTTPPTPAPTSTPLPSSAASPELVAQLLNAPSELDRIKLLKDNQFVFDFKNSKLGVTQGTGGKTVATSRTNFPAVIGHNVAMTVGFIEACGINLPHTHPRATEINFIASGKFEAGFFLENQAKFIGHTLEAGMATVFPQGAIHFEINMNCEPAMFVAAFNNEDPGVQTTASSFFGLPADVVGVSLNISSIQTVEDLGKHLPQNPAVAMQACMKRCGFSD</sequence>
<evidence type="ECO:0000250" key="1"/>
<evidence type="ECO:0000255" key="2"/>
<evidence type="ECO:0000256" key="3">
    <source>
        <dbReference type="SAM" id="MobiDB-lite"/>
    </source>
</evidence>
<evidence type="ECO:0000269" key="4">
    <source>
    </source>
</evidence>
<evidence type="ECO:0000305" key="5"/>
<organism>
    <name type="scientific">Physarum polycephalum</name>
    <name type="common">Slime mold</name>
    <dbReference type="NCBI Taxonomy" id="5791"/>
    <lineage>
        <taxon>Eukaryota</taxon>
        <taxon>Amoebozoa</taxon>
        <taxon>Evosea</taxon>
        <taxon>Eumycetozoa</taxon>
        <taxon>Myxogastria</taxon>
        <taxon>Myxogastromycetidae</taxon>
        <taxon>Physariida</taxon>
        <taxon>Physaraceae</taxon>
        <taxon>Physarum</taxon>
    </lineage>
</organism>
<feature type="signal peptide" evidence="4">
    <location>
        <begin position="1"/>
        <end position="19"/>
    </location>
</feature>
<feature type="chain" id="PRO_0000010846" description="Spherulin-1A">
    <location>
        <begin position="20"/>
        <end position="246"/>
    </location>
</feature>
<feature type="domain" description="Cupin type-1" evidence="2">
    <location>
        <begin position="74"/>
        <end position="220"/>
    </location>
</feature>
<feature type="region of interest" description="Disordered" evidence="3">
    <location>
        <begin position="23"/>
        <end position="45"/>
    </location>
</feature>
<feature type="compositionally biased region" description="Pro residues" evidence="3">
    <location>
        <begin position="25"/>
        <end position="39"/>
    </location>
</feature>
<feature type="binding site" evidence="1">
    <location>
        <position position="123"/>
    </location>
    <ligand>
        <name>Mn(2+)</name>
        <dbReference type="ChEBI" id="CHEBI:29035"/>
    </ligand>
</feature>
<feature type="binding site" evidence="1">
    <location>
        <position position="125"/>
    </location>
    <ligand>
        <name>Mn(2+)</name>
        <dbReference type="ChEBI" id="CHEBI:29035"/>
    </ligand>
</feature>
<feature type="binding site" evidence="1">
    <location>
        <position position="130"/>
    </location>
    <ligand>
        <name>Mn(2+)</name>
        <dbReference type="ChEBI" id="CHEBI:29035"/>
    </ligand>
</feature>
<feature type="binding site" evidence="1">
    <location>
        <position position="170"/>
    </location>
    <ligand>
        <name>Mn(2+)</name>
        <dbReference type="ChEBI" id="CHEBI:29035"/>
    </ligand>
</feature>
<feature type="glycosylation site" description="N-linked (GlcNAc...) asparagine" evidence="2">
    <location>
        <position position="213"/>
    </location>
</feature>
<dbReference type="EMBL" id="M18428">
    <property type="protein sequence ID" value="AAA29982.1"/>
    <property type="molecule type" value="mRNA"/>
</dbReference>
<dbReference type="PIR" id="B29624">
    <property type="entry name" value="B29624"/>
</dbReference>
<dbReference type="SMR" id="P09350"/>
<dbReference type="GO" id="GO:0005576">
    <property type="term" value="C:extracellular region"/>
    <property type="evidence" value="ECO:0007669"/>
    <property type="project" value="UniProtKB-KW"/>
</dbReference>
<dbReference type="GO" id="GO:0030145">
    <property type="term" value="F:manganese ion binding"/>
    <property type="evidence" value="ECO:0007669"/>
    <property type="project" value="InterPro"/>
</dbReference>
<dbReference type="CDD" id="cd02241">
    <property type="entry name" value="cupin_OxOx"/>
    <property type="match status" value="1"/>
</dbReference>
<dbReference type="Gene3D" id="2.60.120.10">
    <property type="entry name" value="Jelly Rolls"/>
    <property type="match status" value="1"/>
</dbReference>
<dbReference type="InterPro" id="IPR006045">
    <property type="entry name" value="Cupin_1"/>
</dbReference>
<dbReference type="InterPro" id="IPR001929">
    <property type="entry name" value="Germin"/>
</dbReference>
<dbReference type="InterPro" id="IPR019780">
    <property type="entry name" value="Germin_Mn-BS"/>
</dbReference>
<dbReference type="InterPro" id="IPR014710">
    <property type="entry name" value="RmlC-like_jellyroll"/>
</dbReference>
<dbReference type="InterPro" id="IPR011051">
    <property type="entry name" value="RmlC_Cupin_sf"/>
</dbReference>
<dbReference type="PANTHER" id="PTHR31238">
    <property type="entry name" value="GERMIN-LIKE PROTEIN SUBFAMILY 3 MEMBER 3"/>
    <property type="match status" value="1"/>
</dbReference>
<dbReference type="Pfam" id="PF00190">
    <property type="entry name" value="Cupin_1"/>
    <property type="match status" value="1"/>
</dbReference>
<dbReference type="PRINTS" id="PR00325">
    <property type="entry name" value="GERMIN"/>
</dbReference>
<dbReference type="SMART" id="SM00835">
    <property type="entry name" value="Cupin_1"/>
    <property type="match status" value="1"/>
</dbReference>
<dbReference type="SUPFAM" id="SSF51182">
    <property type="entry name" value="RmlC-like cupins"/>
    <property type="match status" value="1"/>
</dbReference>
<dbReference type="PROSITE" id="PS00725">
    <property type="entry name" value="GERMIN"/>
    <property type="match status" value="1"/>
</dbReference>
<accession>P09350</accession>
<name>SR1A_PHYPO</name>
<keyword id="KW-0134">Cell wall</keyword>
<keyword id="KW-0903">Direct protein sequencing</keyword>
<keyword id="KW-0325">Glycoprotein</keyword>
<keyword id="KW-0464">Manganese</keyword>
<keyword id="KW-0479">Metal-binding</keyword>
<keyword id="KW-0964">Secreted</keyword>
<keyword id="KW-0732">Signal</keyword>
<protein>
    <recommendedName>
        <fullName>Spherulin-1A</fullName>
    </recommendedName>
</protein>
<reference key="1">
    <citation type="journal article" date="1987" name="Gene">
        <title>Gene families encode the major encystment-specific proteins of Physarum polycephalum plasmodia.</title>
        <authorList>
            <person name="Bernier F."/>
            <person name="Lemieux G."/>
            <person name="Pallotta D."/>
        </authorList>
    </citation>
    <scope>NUCLEOTIDE SEQUENCE [MRNA]</scope>
</reference>
<reference key="2">
    <citation type="journal article" date="1992" name="Eur. J. Biochem.">
        <title>Germin isoforms are discrete temporal markers of wheat development. Pseudogermin is a uniquely thermostable water-soluble oligomeric protein in ungerminated embryos and like germin in germinated embryos, it is incorporated into cell walls.</title>
        <authorList>
            <person name="Lane B.G."/>
            <person name="Cuming A.C."/>
            <person name="Fregeau J."/>
            <person name="Carpita N.C."/>
            <person name="Hurkman W.J."/>
            <person name="Bernier F."/>
            <person name="Dratewka-Kos E."/>
            <person name="Kennedy T.D."/>
        </authorList>
    </citation>
    <scope>PROTEIN SEQUENCE OF 20-34</scope>
</reference>
<comment type="subcellular location">
    <subcellularLocation>
        <location>Secreted</location>
        <location>Cell wall</location>
    </subcellularLocation>
</comment>
<comment type="developmental stage">
    <text>Accumulates specifically during spherulation.</text>
</comment>
<comment type="miscellaneous">
    <text>Spherulin is a major encystment-specific protein.</text>
</comment>
<comment type="similarity">
    <text evidence="5">Belongs to the germin family.</text>
</comment>
<proteinExistence type="evidence at protein level"/>